<feature type="chain" id="PRO_0000451462" description="Nicotinate N-methyltransferase 1">
    <location>
        <begin position="1"/>
        <end position="355"/>
    </location>
</feature>
<feature type="binding site" evidence="1">
    <location>
        <position position="222"/>
    </location>
    <ligand>
        <name>S-adenosyl-L-methionine</name>
        <dbReference type="ChEBI" id="CHEBI:59789"/>
    </ligand>
</feature>
<evidence type="ECO:0000255" key="1">
    <source>
        <dbReference type="PROSITE-ProRule" id="PRU01020"/>
    </source>
</evidence>
<evidence type="ECO:0000269" key="2">
    <source>
    </source>
</evidence>
<evidence type="ECO:0000305" key="3"/>
<evidence type="ECO:0000312" key="4">
    <source>
        <dbReference type="EMBL" id="KRH21851.1"/>
    </source>
</evidence>
<dbReference type="EC" id="2.1.1.7" evidence="2"/>
<dbReference type="EMBL" id="CM000846">
    <property type="protein sequence ID" value="KRH21851.1"/>
    <property type="molecule type" value="Genomic_DNA"/>
</dbReference>
<dbReference type="EMBL" id="CM000846">
    <property type="protein sequence ID" value="KRH21852.1"/>
    <property type="molecule type" value="Genomic_DNA"/>
</dbReference>
<dbReference type="RefSeq" id="XP_006594704.1">
    <property type="nucleotide sequence ID" value="XM_006594641.2"/>
</dbReference>
<dbReference type="SMR" id="I1M2U5"/>
<dbReference type="FunCoup" id="I1M2U5">
    <property type="interactions" value="658"/>
</dbReference>
<dbReference type="STRING" id="3847.I1M2U5"/>
<dbReference type="PaxDb" id="3847-GLYMA13G33830.1"/>
<dbReference type="EnsemblPlants" id="KRH21851">
    <property type="protein sequence ID" value="KRH21851"/>
    <property type="gene ID" value="GLYMA_13G263200"/>
</dbReference>
<dbReference type="EnsemblPlants" id="KRH21852">
    <property type="protein sequence ID" value="KRH21852"/>
    <property type="gene ID" value="GLYMA_13G263200"/>
</dbReference>
<dbReference type="Gramene" id="KRH21851">
    <property type="protein sequence ID" value="KRH21851"/>
    <property type="gene ID" value="GLYMA_13G263200"/>
</dbReference>
<dbReference type="Gramene" id="KRH21852">
    <property type="protein sequence ID" value="KRH21852"/>
    <property type="gene ID" value="GLYMA_13G263200"/>
</dbReference>
<dbReference type="eggNOG" id="KOG3178">
    <property type="taxonomic scope" value="Eukaryota"/>
</dbReference>
<dbReference type="HOGENOM" id="CLU_005533_12_1_1"/>
<dbReference type="InParanoid" id="I1M2U5"/>
<dbReference type="OMA" id="CTEPWTW"/>
<dbReference type="OrthoDB" id="1606438at2759"/>
<dbReference type="SABIO-RK" id="I1M2U5"/>
<dbReference type="Proteomes" id="UP000008827">
    <property type="component" value="Chromosome 13"/>
</dbReference>
<dbReference type="GO" id="GO:0008938">
    <property type="term" value="F:nicotinate N-methyltransferase activity"/>
    <property type="evidence" value="ECO:0000314"/>
    <property type="project" value="UniProtKB"/>
</dbReference>
<dbReference type="GO" id="GO:0008171">
    <property type="term" value="F:O-methyltransferase activity"/>
    <property type="evidence" value="ECO:0000318"/>
    <property type="project" value="GO_Central"/>
</dbReference>
<dbReference type="GO" id="GO:0046983">
    <property type="term" value="F:protein dimerization activity"/>
    <property type="evidence" value="ECO:0007669"/>
    <property type="project" value="InterPro"/>
</dbReference>
<dbReference type="GO" id="GO:0008757">
    <property type="term" value="F:S-adenosylmethionine-dependent methyltransferase activity"/>
    <property type="evidence" value="ECO:0000318"/>
    <property type="project" value="GO_Central"/>
</dbReference>
<dbReference type="GO" id="GO:0009058">
    <property type="term" value="P:biosynthetic process"/>
    <property type="evidence" value="ECO:0000318"/>
    <property type="project" value="GO_Central"/>
</dbReference>
<dbReference type="GO" id="GO:0032259">
    <property type="term" value="P:methylation"/>
    <property type="evidence" value="ECO:0000318"/>
    <property type="project" value="GO_Central"/>
</dbReference>
<dbReference type="GO" id="GO:1901847">
    <property type="term" value="P:nicotinate metabolic process"/>
    <property type="evidence" value="ECO:0000314"/>
    <property type="project" value="UniProtKB"/>
</dbReference>
<dbReference type="FunFam" id="1.10.10.10:FF:000604">
    <property type="entry name" value="Caffeic acid 3-O-methyltransferase"/>
    <property type="match status" value="1"/>
</dbReference>
<dbReference type="FunFam" id="3.40.50.150:FF:000223">
    <property type="entry name" value="Caffeic acid 3-O-methyltransferase"/>
    <property type="match status" value="1"/>
</dbReference>
<dbReference type="Gene3D" id="3.40.50.150">
    <property type="entry name" value="Vaccinia Virus protein VP39"/>
    <property type="match status" value="1"/>
</dbReference>
<dbReference type="Gene3D" id="1.10.10.10">
    <property type="entry name" value="Winged helix-like DNA-binding domain superfamily/Winged helix DNA-binding domain"/>
    <property type="match status" value="1"/>
</dbReference>
<dbReference type="InterPro" id="IPR016461">
    <property type="entry name" value="COMT-like"/>
</dbReference>
<dbReference type="InterPro" id="IPR001077">
    <property type="entry name" value="O_MeTrfase_dom"/>
</dbReference>
<dbReference type="InterPro" id="IPR012967">
    <property type="entry name" value="Plant_O-MeTrfase_dimerisation"/>
</dbReference>
<dbReference type="InterPro" id="IPR029063">
    <property type="entry name" value="SAM-dependent_MTases_sf"/>
</dbReference>
<dbReference type="InterPro" id="IPR036388">
    <property type="entry name" value="WH-like_DNA-bd_sf"/>
</dbReference>
<dbReference type="InterPro" id="IPR036390">
    <property type="entry name" value="WH_DNA-bd_sf"/>
</dbReference>
<dbReference type="PANTHER" id="PTHR11746">
    <property type="entry name" value="O-METHYLTRANSFERASE"/>
    <property type="match status" value="1"/>
</dbReference>
<dbReference type="Pfam" id="PF08100">
    <property type="entry name" value="Dimerisation"/>
    <property type="match status" value="1"/>
</dbReference>
<dbReference type="Pfam" id="PF00891">
    <property type="entry name" value="Methyltransf_2"/>
    <property type="match status" value="1"/>
</dbReference>
<dbReference type="PIRSF" id="PIRSF005739">
    <property type="entry name" value="O-mtase"/>
    <property type="match status" value="1"/>
</dbReference>
<dbReference type="SUPFAM" id="SSF53335">
    <property type="entry name" value="S-adenosyl-L-methionine-dependent methyltransferases"/>
    <property type="match status" value="1"/>
</dbReference>
<dbReference type="SUPFAM" id="SSF46785">
    <property type="entry name" value="Winged helix' DNA-binding domain"/>
    <property type="match status" value="1"/>
</dbReference>
<dbReference type="PROSITE" id="PS51683">
    <property type="entry name" value="SAM_OMT_II"/>
    <property type="match status" value="1"/>
</dbReference>
<keyword id="KW-0489">Methyltransferase</keyword>
<keyword id="KW-1185">Reference proteome</keyword>
<keyword id="KW-0949">S-adenosyl-L-methionine</keyword>
<keyword id="KW-0808">Transferase</keyword>
<accession>I1M2U5</accession>
<gene>
    <name evidence="3" type="primary">NANMT1</name>
    <name evidence="4" type="ORF">GLYMA_13G263200</name>
</gene>
<comment type="function">
    <text evidence="2">Involved in nicotinate detoxification in planta (PubMed:28533213). Catalyzes the conversion of nicotinate to N-methylnicotinate, which is a detoxified form of endogenous nicotinate in planta (PubMed:28533213).</text>
</comment>
<comment type="catalytic activity">
    <reaction evidence="2">
        <text>nicotinate + S-adenosyl-L-methionine = N-methylnicotinate + S-adenosyl-L-homocysteine</text>
        <dbReference type="Rhea" id="RHEA:20241"/>
        <dbReference type="ChEBI" id="CHEBI:18123"/>
        <dbReference type="ChEBI" id="CHEBI:32544"/>
        <dbReference type="ChEBI" id="CHEBI:57856"/>
        <dbReference type="ChEBI" id="CHEBI:59789"/>
        <dbReference type="EC" id="2.1.1.7"/>
    </reaction>
    <physiologicalReaction direction="left-to-right" evidence="2">
        <dbReference type="Rhea" id="RHEA:20242"/>
    </physiologicalReaction>
</comment>
<comment type="biophysicochemical properties">
    <kinetics>
        <KM evidence="2">55.86 uM for nicotinate</KM>
        <KM evidence="2">69.2 uM for S-adenosyl-L-methionine</KM>
        <text evidence="2">kcat is 4.81 sec(-1) with nicotinate as substrate (PubMed:28533213). kcat is 4.14 sec(-1) with S-adenosyl-L-methionine as substrate (PubMed:28533213).</text>
    </kinetics>
</comment>
<comment type="similarity">
    <text evidence="3">Belongs to the class I-like SAM-binding methyltransferase superfamily. Cation-independent O-methyltransferase family.</text>
</comment>
<name>NAMT1_SOYBN</name>
<proteinExistence type="evidence at protein level"/>
<sequence>MEKEESTEQRKQARLAIMELANMISVPMALNAVVRLNVADAIWQGGANNPLSAAEILPRLLPAGGGDAENLQRLLRMLASYGVFYEHLSAGERKYSLTDVGKTLVTDEQGLSYAHYVLQHHQDALMRAWPMVHEAVVDPTKEPFERANGEPAYGYYLKHPEMNDLMVRAMSGVSVPFIRAMLEGYDGFQGVEKLVDVGGSGGDCLRMILEKHPTIKEGINFDLPEVVAKAPQIPFVTHVGGDMFKFIPQGDAIFMKWVLTTWTDEECKHIMQNCHKALPEGGKLIACEPVLPEDSDESHRTRALLEGDIFVMTIYRAKGKHRTEEQFRQLAIDAGFPRFRAFHVDHFYTVLEFQK</sequence>
<organism>
    <name type="scientific">Glycine max</name>
    <name type="common">Soybean</name>
    <name type="synonym">Glycine hispida</name>
    <dbReference type="NCBI Taxonomy" id="3847"/>
    <lineage>
        <taxon>Eukaryota</taxon>
        <taxon>Viridiplantae</taxon>
        <taxon>Streptophyta</taxon>
        <taxon>Embryophyta</taxon>
        <taxon>Tracheophyta</taxon>
        <taxon>Spermatophyta</taxon>
        <taxon>Magnoliopsida</taxon>
        <taxon>eudicotyledons</taxon>
        <taxon>Gunneridae</taxon>
        <taxon>Pentapetalae</taxon>
        <taxon>rosids</taxon>
        <taxon>fabids</taxon>
        <taxon>Fabales</taxon>
        <taxon>Fabaceae</taxon>
        <taxon>Papilionoideae</taxon>
        <taxon>50 kb inversion clade</taxon>
        <taxon>NPAAA clade</taxon>
        <taxon>indigoferoid/millettioid clade</taxon>
        <taxon>Phaseoleae</taxon>
        <taxon>Glycine</taxon>
        <taxon>Glycine subgen. Soja</taxon>
    </lineage>
</organism>
<reference key="1">
    <citation type="journal article" date="2010" name="Nature">
        <title>Genome sequence of the palaeopolyploid soybean.</title>
        <authorList>
            <person name="Schmutz J."/>
            <person name="Cannon S.B."/>
            <person name="Schlueter J."/>
            <person name="Ma J."/>
            <person name="Mitros T."/>
            <person name="Nelson W."/>
            <person name="Hyten D.L."/>
            <person name="Song Q."/>
            <person name="Thelen J.J."/>
            <person name="Cheng J."/>
            <person name="Xu D."/>
            <person name="Hellsten U."/>
            <person name="May G.D."/>
            <person name="Yu Y."/>
            <person name="Sakurai T."/>
            <person name="Umezawa T."/>
            <person name="Bhattacharyya M.K."/>
            <person name="Sandhu D."/>
            <person name="Valliyodan B."/>
            <person name="Lindquist E."/>
            <person name="Peto M."/>
            <person name="Grant D."/>
            <person name="Shu S."/>
            <person name="Goodstein D."/>
            <person name="Barry K."/>
            <person name="Futrell-Griggs M."/>
            <person name="Abernathy B."/>
            <person name="Du J."/>
            <person name="Tian Z."/>
            <person name="Zhu L."/>
            <person name="Gill N."/>
            <person name="Joshi T."/>
            <person name="Libault M."/>
            <person name="Sethuraman A."/>
            <person name="Zhang X.-C."/>
            <person name="Shinozaki K."/>
            <person name="Nguyen H.T."/>
            <person name="Wing R.A."/>
            <person name="Cregan P."/>
            <person name="Specht J."/>
            <person name="Grimwood J."/>
            <person name="Rokhsar D."/>
            <person name="Stacey G."/>
            <person name="Shoemaker R.C."/>
            <person name="Jackson S.A."/>
        </authorList>
    </citation>
    <scope>NUCLEOTIDE SEQUENCE [LARGE SCALE GENOMIC DNA]</scope>
    <source>
        <strain>cv. Williams 82</strain>
    </source>
</reference>
<reference key="2">
    <citation type="journal article" date="2017" name="Plant Physiol.">
        <title>A novel N-methyltransferase in Arabidopsis appears to feed a conserved pathway for nicotinate detoxification among land plants and is associated with lignin biosynthesis.</title>
        <authorList>
            <person name="Li W."/>
            <person name="Zhang F."/>
            <person name="Wu R."/>
            <person name="Jia L."/>
            <person name="Li G."/>
            <person name="Guo Y."/>
            <person name="Liu C."/>
            <person name="Wang G."/>
        </authorList>
    </citation>
    <scope>FUNCTION</scope>
    <scope>CATALYTIC ACTIVITY</scope>
    <scope>BIOPHYSICOCHEMICAL PROPERTIES</scope>
</reference>
<protein>
    <recommendedName>
        <fullName evidence="3">Nicotinate N-methyltransferase 1</fullName>
        <ecNumber evidence="2">2.1.1.7</ecNumber>
    </recommendedName>
</protein>